<comment type="function">
    <text evidence="1 2 3">Catalytic subunit of the SLX1-SLX4 structure-specific endonuclease that resolves DNA secondary structures generated during DNA repair and recombination. Has endonuclease activity towards branched DNA substrates, introducing single-strand cuts in duplex DNA close to junctions with ss-DNA. Has a preference for simple Y, 5'-flap and replication fork-like structures. It cleaves the strand bearing the 5'-non-homologous arm at the branch site junction and generates ligatable, nicked products from the 5'-flap or replication fork substrates. Plays a critical role in maintaining the integrity of the ribosomal DNA (rDNA) loci, where it has a role in re-starting stalled replication forks. Has Holliday junction resolvase activity in vitro.</text>
</comment>
<comment type="cofactor">
    <cofactor evidence="1">
        <name>a divalent metal cation</name>
        <dbReference type="ChEBI" id="CHEBI:60240"/>
    </cofactor>
</comment>
<comment type="subunit">
    <text>Forms a heterodimer with SLX4.</text>
</comment>
<comment type="interaction">
    <interactant intactId="EBI-21016">
        <id>P38324</id>
    </interactant>
    <interactant intactId="EBI-37788">
        <id>Q12098</id>
        <label>SLX4</label>
    </interactant>
    <organismsDiffer>false</organismsDiffer>
    <experiments>6</experiments>
</comment>
<comment type="subcellular location">
    <subcellularLocation>
        <location evidence="1 3">Nucleus</location>
    </subcellularLocation>
</comment>
<comment type="similarity">
    <text evidence="1">Belongs to the SLX1 family.</text>
</comment>
<sequence length="304" mass="35857">MSQKIQQHQFPDFYCCYLLQSINKRQSFYVGSTPNPVRRLRQHNGKLAVGGAYRTKRDGSRPWEMIMIVRGFPSKIAALQFEHAWQHGYQTHYIAEKDRVVKHKAGGRTLHHKVALMKLLLKHEFFQRMNLIVEVFNIKAWEVWKQDKFFIERDRFPINIQINENALEEPKEKTVDVLMDHSDENLKVVEAVYTKVIENERNIFETFEKKLTTGVVRCEICEKEIDYTSEEQNLKPFVALCNNKDCGCVNHLKCLHRYFLDDEQLMVGRRNLIPRGGKCPKCDMFCDWTTLVKFSTRMKLAHGK</sequence>
<keyword id="KW-0002">3D-structure</keyword>
<keyword id="KW-0227">DNA damage</keyword>
<keyword id="KW-0233">DNA recombination</keyword>
<keyword id="KW-0234">DNA repair</keyword>
<keyword id="KW-0255">Endonuclease</keyword>
<keyword id="KW-0378">Hydrolase</keyword>
<keyword id="KW-0479">Metal-binding</keyword>
<keyword id="KW-0540">Nuclease</keyword>
<keyword id="KW-0539">Nucleus</keyword>
<keyword id="KW-1185">Reference proteome</keyword>
<keyword id="KW-0862">Zinc</keyword>
<keyword id="KW-0863">Zinc-finger</keyword>
<reference key="1">
    <citation type="journal article" date="1994" name="EMBO J.">
        <title>Complete DNA sequence of yeast chromosome II.</title>
        <authorList>
            <person name="Feldmann H."/>
            <person name="Aigle M."/>
            <person name="Aljinovic G."/>
            <person name="Andre B."/>
            <person name="Baclet M.C."/>
            <person name="Barthe C."/>
            <person name="Baur A."/>
            <person name="Becam A.-M."/>
            <person name="Biteau N."/>
            <person name="Boles E."/>
            <person name="Brandt T."/>
            <person name="Brendel M."/>
            <person name="Brueckner M."/>
            <person name="Bussereau F."/>
            <person name="Christiansen C."/>
            <person name="Contreras R."/>
            <person name="Crouzet M."/>
            <person name="Cziepluch C."/>
            <person name="Demolis N."/>
            <person name="Delaveau T."/>
            <person name="Doignon F."/>
            <person name="Domdey H."/>
            <person name="Duesterhus S."/>
            <person name="Dubois E."/>
            <person name="Dujon B."/>
            <person name="El Bakkoury M."/>
            <person name="Entian K.-D."/>
            <person name="Feuermann M."/>
            <person name="Fiers W."/>
            <person name="Fobo G.M."/>
            <person name="Fritz C."/>
            <person name="Gassenhuber J."/>
            <person name="Glansdorff N."/>
            <person name="Goffeau A."/>
            <person name="Grivell L.A."/>
            <person name="de Haan M."/>
            <person name="Hein C."/>
            <person name="Herbert C.J."/>
            <person name="Hollenberg C.P."/>
            <person name="Holmstroem K."/>
            <person name="Jacq C."/>
            <person name="Jacquet M."/>
            <person name="Jauniaux J.-C."/>
            <person name="Jonniaux J.-L."/>
            <person name="Kallesoee T."/>
            <person name="Kiesau P."/>
            <person name="Kirchrath L."/>
            <person name="Koetter P."/>
            <person name="Korol S."/>
            <person name="Liebl S."/>
            <person name="Logghe M."/>
            <person name="Lohan A.J.E."/>
            <person name="Louis E.J."/>
            <person name="Li Z.Y."/>
            <person name="Maat M.J."/>
            <person name="Mallet L."/>
            <person name="Mannhaupt G."/>
            <person name="Messenguy F."/>
            <person name="Miosga T."/>
            <person name="Molemans F."/>
            <person name="Mueller S."/>
            <person name="Nasr F."/>
            <person name="Obermaier B."/>
            <person name="Perea J."/>
            <person name="Pierard A."/>
            <person name="Piravandi E."/>
            <person name="Pohl F.M."/>
            <person name="Pohl T.M."/>
            <person name="Potier S."/>
            <person name="Proft M."/>
            <person name="Purnelle B."/>
            <person name="Ramezani Rad M."/>
            <person name="Rieger M."/>
            <person name="Rose M."/>
            <person name="Schaaff-Gerstenschlaeger I."/>
            <person name="Scherens B."/>
            <person name="Schwarzlose C."/>
            <person name="Skala J."/>
            <person name="Slonimski P.P."/>
            <person name="Smits P.H.M."/>
            <person name="Souciet J.-L."/>
            <person name="Steensma H.Y."/>
            <person name="Stucka R."/>
            <person name="Urrestarazu L.A."/>
            <person name="van der Aart Q.J.M."/>
            <person name="Van Dyck L."/>
            <person name="Vassarotti A."/>
            <person name="Vetter I."/>
            <person name="Vierendeels F."/>
            <person name="Vissers S."/>
            <person name="Wagner G."/>
            <person name="de Wergifosse P."/>
            <person name="Wolfe K.H."/>
            <person name="Zagulski M."/>
            <person name="Zimmermann F.K."/>
            <person name="Mewes H.-W."/>
            <person name="Kleine K."/>
        </authorList>
    </citation>
    <scope>NUCLEOTIDE SEQUENCE [LARGE SCALE GENOMIC DNA]</scope>
    <source>
        <strain>ATCC 204508 / S288c</strain>
    </source>
</reference>
<reference key="2">
    <citation type="journal article" date="2014" name="G3 (Bethesda)">
        <title>The reference genome sequence of Saccharomyces cerevisiae: Then and now.</title>
        <authorList>
            <person name="Engel S.R."/>
            <person name="Dietrich F.S."/>
            <person name="Fisk D.G."/>
            <person name="Binkley G."/>
            <person name="Balakrishnan R."/>
            <person name="Costanzo M.C."/>
            <person name="Dwight S.S."/>
            <person name="Hitz B.C."/>
            <person name="Karra K."/>
            <person name="Nash R.S."/>
            <person name="Weng S."/>
            <person name="Wong E.D."/>
            <person name="Lloyd P."/>
            <person name="Skrzypek M.S."/>
            <person name="Miyasato S.R."/>
            <person name="Simison M."/>
            <person name="Cherry J.M."/>
        </authorList>
    </citation>
    <scope>GENOME REANNOTATION</scope>
    <source>
        <strain>ATCC 204508 / S288c</strain>
    </source>
</reference>
<reference key="3">
    <citation type="journal article" date="2001" name="Genetics">
        <title>Requirement for three novel protein complexes in the absence of the Sgs1 DNA helicase in Saccharomyces cerevisiae.</title>
        <authorList>
            <person name="Mullen J.R."/>
            <person name="Kaliraman V."/>
            <person name="Ibrahim S.S."/>
            <person name="Brill S.J."/>
        </authorList>
    </citation>
    <scope>FUNCTION</scope>
    <scope>INTERACTION WITH SLX4</scope>
</reference>
<reference key="4">
    <citation type="journal article" date="2003" name="Genes Dev.">
        <title>Slx1-Slx4 is a second structure-specific endonuclease functionally redundant with Sgs1-Top3.</title>
        <authorList>
            <person name="Fricke W.M."/>
            <person name="Brill S.J."/>
        </authorList>
    </citation>
    <scope>FUNCTION</scope>
    <scope>SUBCELLULAR LOCATION</scope>
</reference>
<accession>P38324</accession>
<accession>D6VQM3</accession>
<evidence type="ECO:0000255" key="1">
    <source>
        <dbReference type="HAMAP-Rule" id="MF_03100"/>
    </source>
</evidence>
<evidence type="ECO:0000269" key="2">
    <source>
    </source>
</evidence>
<evidence type="ECO:0000269" key="3">
    <source>
    </source>
</evidence>
<evidence type="ECO:0007829" key="4">
    <source>
        <dbReference type="PDB" id="7CQ2"/>
    </source>
</evidence>
<evidence type="ECO:0007829" key="5">
    <source>
        <dbReference type="PDB" id="7CQ3"/>
    </source>
</evidence>
<name>SLX1_YEAST</name>
<feature type="chain" id="PRO_0000202517" description="Structure-specific endonuclease subunit SLX1">
    <location>
        <begin position="1"/>
        <end position="304"/>
    </location>
</feature>
<feature type="domain" description="GIY-YIG" evidence="1">
    <location>
        <begin position="12"/>
        <end position="95"/>
    </location>
</feature>
<feature type="zinc finger region" description="SLX1-type" evidence="1">
    <location>
        <begin position="218"/>
        <end position="282"/>
    </location>
</feature>
<feature type="strand" evidence="5">
    <location>
        <begin position="15"/>
        <end position="23"/>
    </location>
</feature>
<feature type="strand" evidence="5">
    <location>
        <begin position="28"/>
        <end position="34"/>
    </location>
</feature>
<feature type="helix" evidence="5">
    <location>
        <begin position="36"/>
        <end position="44"/>
    </location>
</feature>
<feature type="strand" evidence="5">
    <location>
        <begin position="45"/>
        <end position="47"/>
    </location>
</feature>
<feature type="helix" evidence="5">
    <location>
        <begin position="53"/>
        <end position="56"/>
    </location>
</feature>
<feature type="turn" evidence="5">
    <location>
        <begin position="58"/>
        <end position="60"/>
    </location>
</feature>
<feature type="strand" evidence="5">
    <location>
        <begin position="62"/>
        <end position="70"/>
    </location>
</feature>
<feature type="helix" evidence="5">
    <location>
        <begin position="75"/>
        <end position="86"/>
    </location>
</feature>
<feature type="helix" evidence="5">
    <location>
        <begin position="88"/>
        <end position="90"/>
    </location>
</feature>
<feature type="helix" evidence="5">
    <location>
        <begin position="96"/>
        <end position="98"/>
    </location>
</feature>
<feature type="strand" evidence="4">
    <location>
        <begin position="103"/>
        <end position="106"/>
    </location>
</feature>
<feature type="helix" evidence="5">
    <location>
        <begin position="110"/>
        <end position="122"/>
    </location>
</feature>
<feature type="helix" evidence="5">
    <location>
        <begin position="124"/>
        <end position="127"/>
    </location>
</feature>
<feature type="turn" evidence="5">
    <location>
        <begin position="128"/>
        <end position="130"/>
    </location>
</feature>
<feature type="strand" evidence="5">
    <location>
        <begin position="132"/>
        <end position="137"/>
    </location>
</feature>
<feature type="helix" evidence="5">
    <location>
        <begin position="138"/>
        <end position="146"/>
    </location>
</feature>
<feature type="turn" evidence="4">
    <location>
        <begin position="152"/>
        <end position="154"/>
    </location>
</feature>
<feature type="strand" evidence="5">
    <location>
        <begin position="159"/>
        <end position="167"/>
    </location>
</feature>
<feature type="helix" evidence="5">
    <location>
        <begin position="175"/>
        <end position="211"/>
    </location>
</feature>
<feature type="turn" evidence="5">
    <location>
        <begin position="219"/>
        <end position="221"/>
    </location>
</feature>
<feature type="helix" evidence="5">
    <location>
        <begin position="232"/>
        <end position="234"/>
    </location>
</feature>
<feature type="strand" evidence="5">
    <location>
        <begin position="238"/>
        <end position="240"/>
    </location>
</feature>
<feature type="turn" evidence="5">
    <location>
        <begin position="244"/>
        <end position="246"/>
    </location>
</feature>
<feature type="strand" evidence="5">
    <location>
        <begin position="249"/>
        <end position="251"/>
    </location>
</feature>
<feature type="helix" evidence="5">
    <location>
        <begin position="252"/>
        <end position="267"/>
    </location>
</feature>
<feature type="strand" evidence="5">
    <location>
        <begin position="275"/>
        <end position="278"/>
    </location>
</feature>
<feature type="turn" evidence="5">
    <location>
        <begin position="280"/>
        <end position="282"/>
    </location>
</feature>
<feature type="strand" evidence="5">
    <location>
        <begin position="285"/>
        <end position="287"/>
    </location>
</feature>
<feature type="helix" evidence="5">
    <location>
        <begin position="288"/>
        <end position="302"/>
    </location>
</feature>
<gene>
    <name evidence="1" type="primary">SLX1</name>
    <name type="ordered locus">YBR228W</name>
    <name type="ORF">YBR1525</name>
</gene>
<proteinExistence type="evidence at protein level"/>
<dbReference type="EC" id="3.1.-.-" evidence="1"/>
<dbReference type="EMBL" id="Z36097">
    <property type="protein sequence ID" value="CAA85191.1"/>
    <property type="molecule type" value="Genomic_DNA"/>
</dbReference>
<dbReference type="EMBL" id="BK006936">
    <property type="protein sequence ID" value="DAA07343.1"/>
    <property type="molecule type" value="Genomic_DNA"/>
</dbReference>
<dbReference type="PIR" id="S46104">
    <property type="entry name" value="S46104"/>
</dbReference>
<dbReference type="RefSeq" id="NP_009787.3">
    <property type="nucleotide sequence ID" value="NM_001178576.3"/>
</dbReference>
<dbReference type="PDB" id="7CQ2">
    <property type="method" value="X-ray"/>
    <property type="resolution" value="2.50 A"/>
    <property type="chains" value="A/B=1-304"/>
</dbReference>
<dbReference type="PDB" id="7CQ3">
    <property type="method" value="X-ray"/>
    <property type="resolution" value="1.45 A"/>
    <property type="chains" value="A=1-304"/>
</dbReference>
<dbReference type="PDB" id="7CQ4">
    <property type="method" value="X-ray"/>
    <property type="resolution" value="3.29 A"/>
    <property type="chains" value="A=1-304"/>
</dbReference>
<dbReference type="PDBsum" id="7CQ2"/>
<dbReference type="PDBsum" id="7CQ3"/>
<dbReference type="PDBsum" id="7CQ4"/>
<dbReference type="SMR" id="P38324"/>
<dbReference type="BioGRID" id="32923">
    <property type="interactions" value="103"/>
</dbReference>
<dbReference type="ComplexPortal" id="CPX-1355">
    <property type="entry name" value="RTT107-SLX4-SLX1 complex"/>
</dbReference>
<dbReference type="ComplexPortal" id="CPX-3159">
    <property type="entry name" value="SLX1-SLX4 structure-specific endonuclease complex"/>
</dbReference>
<dbReference type="DIP" id="DIP-1770N"/>
<dbReference type="FunCoup" id="P38324">
    <property type="interactions" value="502"/>
</dbReference>
<dbReference type="IntAct" id="P38324">
    <property type="interactions" value="4"/>
</dbReference>
<dbReference type="MINT" id="P38324"/>
<dbReference type="STRING" id="4932.YBR228W"/>
<dbReference type="PaxDb" id="4932-YBR228W"/>
<dbReference type="PeptideAtlas" id="P38324"/>
<dbReference type="EnsemblFungi" id="YBR228W_mRNA">
    <property type="protein sequence ID" value="YBR228W"/>
    <property type="gene ID" value="YBR228W"/>
</dbReference>
<dbReference type="GeneID" id="852529"/>
<dbReference type="KEGG" id="sce:YBR228W"/>
<dbReference type="AGR" id="SGD:S000000432"/>
<dbReference type="SGD" id="S000000432">
    <property type="gene designation" value="SLX1"/>
</dbReference>
<dbReference type="VEuPathDB" id="FungiDB:YBR228W"/>
<dbReference type="eggNOG" id="KOG3005">
    <property type="taxonomic scope" value="Eukaryota"/>
</dbReference>
<dbReference type="GeneTree" id="ENSGT00390000013368"/>
<dbReference type="HOGENOM" id="CLU_030739_1_1_1"/>
<dbReference type="InParanoid" id="P38324"/>
<dbReference type="OMA" id="HNRGCDF"/>
<dbReference type="OrthoDB" id="24645at2759"/>
<dbReference type="BioCyc" id="YEAST:G3O-29161-MONOMER"/>
<dbReference type="BioGRID-ORCS" id="852529">
    <property type="hits" value="2 hits in 10 CRISPR screens"/>
</dbReference>
<dbReference type="PRO" id="PR:P38324"/>
<dbReference type="Proteomes" id="UP000002311">
    <property type="component" value="Chromosome II"/>
</dbReference>
<dbReference type="RNAct" id="P38324">
    <property type="molecule type" value="protein"/>
</dbReference>
<dbReference type="GO" id="GO:0000228">
    <property type="term" value="C:nuclear chromosome"/>
    <property type="evidence" value="ECO:0000303"/>
    <property type="project" value="ComplexPortal"/>
</dbReference>
<dbReference type="GO" id="GO:0005634">
    <property type="term" value="C:nucleus"/>
    <property type="evidence" value="ECO:0000303"/>
    <property type="project" value="ComplexPortal"/>
</dbReference>
<dbReference type="GO" id="GO:0033557">
    <property type="term" value="C:Slx1-Slx4 complex"/>
    <property type="evidence" value="ECO:0000353"/>
    <property type="project" value="SGD"/>
</dbReference>
<dbReference type="GO" id="GO:0017108">
    <property type="term" value="F:5'-flap endonuclease activity"/>
    <property type="evidence" value="ECO:0000314"/>
    <property type="project" value="SGD"/>
</dbReference>
<dbReference type="GO" id="GO:0008821">
    <property type="term" value="F:crossover junction DNA endonuclease activity"/>
    <property type="evidence" value="ECO:0000318"/>
    <property type="project" value="GO_Central"/>
</dbReference>
<dbReference type="GO" id="GO:0008270">
    <property type="term" value="F:zinc ion binding"/>
    <property type="evidence" value="ECO:0007669"/>
    <property type="project" value="UniProtKB-KW"/>
</dbReference>
<dbReference type="GO" id="GO:0006261">
    <property type="term" value="P:DNA-templated DNA replication"/>
    <property type="evidence" value="ECO:0000316"/>
    <property type="project" value="SGD"/>
</dbReference>
<dbReference type="GO" id="GO:0000724">
    <property type="term" value="P:double-strand break repair via homologous recombination"/>
    <property type="evidence" value="ECO:0000318"/>
    <property type="project" value="GO_Central"/>
</dbReference>
<dbReference type="GO" id="GO:2000001">
    <property type="term" value="P:regulation of DNA damage checkpoint"/>
    <property type="evidence" value="ECO:0000303"/>
    <property type="project" value="ComplexPortal"/>
</dbReference>
<dbReference type="GO" id="GO:1902681">
    <property type="term" value="P:regulation of replication fork arrest at rDNA repeats"/>
    <property type="evidence" value="ECO:0000303"/>
    <property type="project" value="ComplexPortal"/>
</dbReference>
<dbReference type="CDD" id="cd10455">
    <property type="entry name" value="GIY-YIG_SLX1"/>
    <property type="match status" value="1"/>
</dbReference>
<dbReference type="FunFam" id="3.40.1440.10:FF:000006">
    <property type="entry name" value="Structure-specific endonuclease subunit SLX1"/>
    <property type="match status" value="1"/>
</dbReference>
<dbReference type="Gene3D" id="3.40.1440.10">
    <property type="entry name" value="GIY-YIG endonuclease"/>
    <property type="match status" value="1"/>
</dbReference>
<dbReference type="Gene3D" id="3.30.40.10">
    <property type="entry name" value="Zinc/RING finger domain, C3HC4 (zinc finger)"/>
    <property type="match status" value="1"/>
</dbReference>
<dbReference type="HAMAP" id="MF_03100">
    <property type="entry name" value="Endonuc_su_Slx1"/>
    <property type="match status" value="1"/>
</dbReference>
<dbReference type="InterPro" id="IPR000305">
    <property type="entry name" value="GIY-YIG_endonuc"/>
</dbReference>
<dbReference type="InterPro" id="IPR035901">
    <property type="entry name" value="GIY-YIG_endonuc_sf"/>
</dbReference>
<dbReference type="InterPro" id="IPR027520">
    <property type="entry name" value="Slx1"/>
</dbReference>
<dbReference type="InterPro" id="IPR048749">
    <property type="entry name" value="SLX1_C"/>
</dbReference>
<dbReference type="InterPro" id="IPR050381">
    <property type="entry name" value="SLX1_endonuclease"/>
</dbReference>
<dbReference type="InterPro" id="IPR013083">
    <property type="entry name" value="Znf_RING/FYVE/PHD"/>
</dbReference>
<dbReference type="PANTHER" id="PTHR20208">
    <property type="entry name" value="STRUCTURE-SPECIFIC ENDONUCLEASE SUBUNIT SLX1"/>
    <property type="match status" value="1"/>
</dbReference>
<dbReference type="PANTHER" id="PTHR20208:SF10">
    <property type="entry name" value="STRUCTURE-SPECIFIC ENDONUCLEASE SUBUNIT SLX1"/>
    <property type="match status" value="1"/>
</dbReference>
<dbReference type="Pfam" id="PF01541">
    <property type="entry name" value="GIY-YIG"/>
    <property type="match status" value="1"/>
</dbReference>
<dbReference type="Pfam" id="PF21202">
    <property type="entry name" value="SLX1_C"/>
    <property type="match status" value="1"/>
</dbReference>
<dbReference type="SMART" id="SM00465">
    <property type="entry name" value="GIYc"/>
    <property type="match status" value="1"/>
</dbReference>
<dbReference type="SUPFAM" id="SSF82771">
    <property type="entry name" value="GIY-YIG endonuclease"/>
    <property type="match status" value="1"/>
</dbReference>
<dbReference type="PROSITE" id="PS50164">
    <property type="entry name" value="GIY_YIG"/>
    <property type="match status" value="1"/>
</dbReference>
<protein>
    <recommendedName>
        <fullName evidence="1">Structure-specific endonuclease subunit SLX1</fullName>
        <ecNumber evidence="1">3.1.-.-</ecNumber>
    </recommendedName>
    <alternativeName>
        <fullName>Synthetic lethal of unknown function protein 1</fullName>
    </alternativeName>
</protein>
<organism>
    <name type="scientific">Saccharomyces cerevisiae (strain ATCC 204508 / S288c)</name>
    <name type="common">Baker's yeast</name>
    <dbReference type="NCBI Taxonomy" id="559292"/>
    <lineage>
        <taxon>Eukaryota</taxon>
        <taxon>Fungi</taxon>
        <taxon>Dikarya</taxon>
        <taxon>Ascomycota</taxon>
        <taxon>Saccharomycotina</taxon>
        <taxon>Saccharomycetes</taxon>
        <taxon>Saccharomycetales</taxon>
        <taxon>Saccharomycetaceae</taxon>
        <taxon>Saccharomyces</taxon>
    </lineage>
</organism>